<sequence>MGRFISVSFGLLVVFLSLSGIGADQECLPGWSFYEGHCYKVFSEYKNWVDAEQYCTEQENGGHLVSFHNREEVDFVVKLGYTILKADIVWIGLRDFWRECHWEWSNGAQLDYKGWSDEPNCFIAYTVGNKWLRRKCSSTQQFICKARVPH</sequence>
<reference key="1">
    <citation type="journal article" date="2009" name="J. Proteomics">
        <title>Combined snake venomics and venom gland transcriptomic analysis of the ocellated carpet viper, Echis ocellatus.</title>
        <authorList>
            <person name="Wagstaff S.C."/>
            <person name="Sanz L."/>
            <person name="Juarez P."/>
            <person name="Harrison R.A."/>
            <person name="Calvete J.J."/>
        </authorList>
    </citation>
    <scope>NUCLEOTIDE SEQUENCE [MRNA]</scope>
    <source>
        <tissue>Venom gland</tissue>
    </source>
</reference>
<protein>
    <recommendedName>
        <fullName>Snaclec CTL-Eoc125</fullName>
    </recommendedName>
    <alternativeName>
        <fullName>C-type lectin-like CTL-Eoc125</fullName>
    </alternativeName>
</protein>
<comment type="function">
    <text evidence="1">Interferes with one step of hemostasis (modulation of platelet aggregation, or coagulation cascade, for example).</text>
</comment>
<comment type="subunit">
    <text evidence="1">Heterodimer; disulfide-linked.</text>
</comment>
<comment type="subcellular location">
    <subcellularLocation>
        <location evidence="1">Secreted</location>
    </subcellularLocation>
</comment>
<comment type="tissue specificity">
    <text evidence="4">Expressed by the venom gland.</text>
</comment>
<comment type="similarity">
    <text evidence="4">Belongs to the snaclec family.</text>
</comment>
<evidence type="ECO:0000250" key="1"/>
<evidence type="ECO:0000255" key="2"/>
<evidence type="ECO:0000255" key="3">
    <source>
        <dbReference type="PROSITE-ProRule" id="PRU00040"/>
    </source>
</evidence>
<evidence type="ECO:0000305" key="4"/>
<accession>B5U6Y7</accession>
<dbReference type="EMBL" id="FM177949">
    <property type="protein sequence ID" value="CAQ72893.1"/>
    <property type="molecule type" value="mRNA"/>
</dbReference>
<dbReference type="SMR" id="B5U6Y7"/>
<dbReference type="GO" id="GO:0005576">
    <property type="term" value="C:extracellular region"/>
    <property type="evidence" value="ECO:0007669"/>
    <property type="project" value="UniProtKB-SubCell"/>
</dbReference>
<dbReference type="GO" id="GO:0090729">
    <property type="term" value="F:toxin activity"/>
    <property type="evidence" value="ECO:0007669"/>
    <property type="project" value="UniProtKB-KW"/>
</dbReference>
<dbReference type="FunFam" id="3.10.100.10:FF:000087">
    <property type="entry name" value="Snaclec rhodocetin subunit delta"/>
    <property type="match status" value="1"/>
</dbReference>
<dbReference type="Gene3D" id="3.10.100.10">
    <property type="entry name" value="Mannose-Binding Protein A, subunit A"/>
    <property type="match status" value="1"/>
</dbReference>
<dbReference type="InterPro" id="IPR001304">
    <property type="entry name" value="C-type_lectin-like"/>
</dbReference>
<dbReference type="InterPro" id="IPR016186">
    <property type="entry name" value="C-type_lectin-like/link_sf"/>
</dbReference>
<dbReference type="InterPro" id="IPR050111">
    <property type="entry name" value="C-type_lectin/snaclec_domain"/>
</dbReference>
<dbReference type="InterPro" id="IPR018378">
    <property type="entry name" value="C-type_lectin_CS"/>
</dbReference>
<dbReference type="InterPro" id="IPR016187">
    <property type="entry name" value="CTDL_fold"/>
</dbReference>
<dbReference type="PANTHER" id="PTHR22803">
    <property type="entry name" value="MANNOSE, PHOSPHOLIPASE, LECTIN RECEPTOR RELATED"/>
    <property type="match status" value="1"/>
</dbReference>
<dbReference type="Pfam" id="PF00059">
    <property type="entry name" value="Lectin_C"/>
    <property type="match status" value="1"/>
</dbReference>
<dbReference type="PRINTS" id="PR01504">
    <property type="entry name" value="PNCREATITSAP"/>
</dbReference>
<dbReference type="SMART" id="SM00034">
    <property type="entry name" value="CLECT"/>
    <property type="match status" value="1"/>
</dbReference>
<dbReference type="SUPFAM" id="SSF56436">
    <property type="entry name" value="C-type lectin-like"/>
    <property type="match status" value="1"/>
</dbReference>
<dbReference type="PROSITE" id="PS00615">
    <property type="entry name" value="C_TYPE_LECTIN_1"/>
    <property type="match status" value="1"/>
</dbReference>
<dbReference type="PROSITE" id="PS50041">
    <property type="entry name" value="C_TYPE_LECTIN_2"/>
    <property type="match status" value="1"/>
</dbReference>
<keyword id="KW-1015">Disulfide bond</keyword>
<keyword id="KW-1199">Hemostasis impairing toxin</keyword>
<keyword id="KW-0964">Secreted</keyword>
<keyword id="KW-0732">Signal</keyword>
<keyword id="KW-0800">Toxin</keyword>
<feature type="signal peptide" evidence="2">
    <location>
        <begin position="1"/>
        <end position="23"/>
    </location>
</feature>
<feature type="chain" id="PRO_0000432584" description="Snaclec CTL-Eoc125">
    <location>
        <begin position="24"/>
        <end position="150"/>
    </location>
</feature>
<feature type="domain" description="C-type lectin" evidence="3">
    <location>
        <begin position="34"/>
        <end position="145"/>
    </location>
</feature>
<feature type="disulfide bond" evidence="3">
    <location>
        <begin position="27"/>
        <end position="38"/>
    </location>
</feature>
<feature type="disulfide bond" evidence="3">
    <location>
        <begin position="55"/>
        <end position="144"/>
    </location>
</feature>
<feature type="disulfide bond" description="Interchain" evidence="3">
    <location>
        <position position="100"/>
    </location>
</feature>
<feature type="disulfide bond" evidence="3">
    <location>
        <begin position="121"/>
        <end position="136"/>
    </location>
</feature>
<name>SL125_ECHOC</name>
<organism>
    <name type="scientific">Echis ocellatus</name>
    <name type="common">Ocellated saw-scaled viper</name>
    <dbReference type="NCBI Taxonomy" id="99586"/>
    <lineage>
        <taxon>Eukaryota</taxon>
        <taxon>Metazoa</taxon>
        <taxon>Chordata</taxon>
        <taxon>Craniata</taxon>
        <taxon>Vertebrata</taxon>
        <taxon>Euteleostomi</taxon>
        <taxon>Lepidosauria</taxon>
        <taxon>Squamata</taxon>
        <taxon>Bifurcata</taxon>
        <taxon>Unidentata</taxon>
        <taxon>Episquamata</taxon>
        <taxon>Toxicofera</taxon>
        <taxon>Serpentes</taxon>
        <taxon>Colubroidea</taxon>
        <taxon>Viperidae</taxon>
        <taxon>Viperinae</taxon>
        <taxon>Echis</taxon>
    </lineage>
</organism>
<proteinExistence type="evidence at transcript level"/>